<proteinExistence type="inferred from homology"/>
<comment type="function">
    <text evidence="1">Catalyzes the transfer of the first rhamnosyl residue on p-hydroxybenzoic acid or phenolphthiocerol derivatives to form, after O-methylation at position 2 of the sugar unit, mono-O-methyl-glycosyl-p-hydroxybenzoic acid derivative (p-HBAD I) and 2-O-methyl-rhamnosyl-phenolphthiocerol dimycocerosate (also called mycoside B) during p-hydroxybenzoic acid derivatives (p-HBAD) and glycosylated phenolphthiocerol dimycocerosates (PGL) biosynthesis.</text>
</comment>
<comment type="similarity">
    <text evidence="2">Belongs to the glycosyltransferase 28 family.</text>
</comment>
<sequence>MRVSCVYATASRWGGPPVASEVRGDAAISTTPDAAPGLAARRRRILFVAEAVTLAHVVRPFALAQSLDPSRYEVHFACDPRYNQLLGPLPFRHHAIHTIPSERFFGNLTQGRFYAMRTLRKYVEADLRVLDEIAPDLVVGDLRISLSVSARLAGIPYIAIANAYWSPYAQRRFPLPDVIWTRLFGVRLVKLLYRLERPLLFALQCMPLNWVRRRHGLSSLGWNLCRIFTDGDHTLYADVPELMPTYDLPANHEYLGPVLWSPAGKPPTWWDSLPTDRPIVYATLGTSGGRNLLQLVLNALAELPVTVIAATAGRSDLKTVPANAFVADYLPGEAAAARSAVVVCNGGSLTTQQALVAGVPVIGVAGNLDQHLNMEAVERAGAGVLLRTERLKSQRVAGAVMQVISRSEYRQAAARLADAFGRDRVGFPQHVENALRLMPENRPRTWLAS</sequence>
<feature type="chain" id="PRO_0000313793" description="PGL/p-HBAD biosynthesis rhamnosyltransferase">
    <location>
        <begin position="1"/>
        <end position="449"/>
    </location>
</feature>
<evidence type="ECO:0000250" key="1"/>
<evidence type="ECO:0000305" key="2"/>
<keyword id="KW-0328">Glycosyltransferase</keyword>
<keyword id="KW-1185">Reference proteome</keyword>
<keyword id="KW-0808">Transferase</keyword>
<name>RNTF_MYCTA</name>
<reference key="1">
    <citation type="journal article" date="2008" name="PLoS ONE">
        <title>Genetic basis of virulence attenuation revealed by comparative genomic analysis of Mycobacterium tuberculosis strain H37Ra versus H37Rv.</title>
        <authorList>
            <person name="Zheng H."/>
            <person name="Lu L."/>
            <person name="Wang B."/>
            <person name="Pu S."/>
            <person name="Zhang X."/>
            <person name="Zhu G."/>
            <person name="Shi W."/>
            <person name="Zhang L."/>
            <person name="Wang H."/>
            <person name="Wang S."/>
            <person name="Zhao G."/>
            <person name="Zhang Y."/>
        </authorList>
    </citation>
    <scope>NUCLEOTIDE SEQUENCE [LARGE SCALE GENOMIC DNA]</scope>
    <source>
        <strain>ATCC 25177 / H37Ra</strain>
    </source>
</reference>
<dbReference type="EC" id="2.4.1.-"/>
<dbReference type="EMBL" id="CP000611">
    <property type="protein sequence ID" value="ABQ74770.1"/>
    <property type="molecule type" value="Genomic_DNA"/>
</dbReference>
<dbReference type="RefSeq" id="WP_003414922.1">
    <property type="nucleotide sequence ID" value="NZ_CP016972.1"/>
</dbReference>
<dbReference type="SMR" id="A5U6X0"/>
<dbReference type="CAZy" id="GT1">
    <property type="family name" value="Glycosyltransferase Family 1"/>
</dbReference>
<dbReference type="KEGG" id="mra:MRA_2989"/>
<dbReference type="eggNOG" id="COG1819">
    <property type="taxonomic scope" value="Bacteria"/>
</dbReference>
<dbReference type="HOGENOM" id="CLU_692271_0_0_11"/>
<dbReference type="Proteomes" id="UP000001988">
    <property type="component" value="Chromosome"/>
</dbReference>
<dbReference type="GO" id="GO:0016758">
    <property type="term" value="F:hexosyltransferase activity"/>
    <property type="evidence" value="ECO:0007669"/>
    <property type="project" value="UniProtKB-ARBA"/>
</dbReference>
<dbReference type="GO" id="GO:0008194">
    <property type="term" value="F:UDP-glycosyltransferase activity"/>
    <property type="evidence" value="ECO:0007669"/>
    <property type="project" value="InterPro"/>
</dbReference>
<dbReference type="GO" id="GO:0009058">
    <property type="term" value="P:biosynthetic process"/>
    <property type="evidence" value="ECO:0007669"/>
    <property type="project" value="UniProtKB-ARBA"/>
</dbReference>
<dbReference type="CDD" id="cd03784">
    <property type="entry name" value="GT1_Gtf-like"/>
    <property type="match status" value="1"/>
</dbReference>
<dbReference type="FunFam" id="3.40.50.2000:FF:000072">
    <property type="entry name" value="Glycosyl transferase"/>
    <property type="match status" value="1"/>
</dbReference>
<dbReference type="FunFam" id="3.40.50.2000:FF:000233">
    <property type="entry name" value="PGL/p-HBAD biosynthesis rhamnosyltransferase"/>
    <property type="match status" value="1"/>
</dbReference>
<dbReference type="Gene3D" id="3.40.50.2000">
    <property type="entry name" value="Glycogen Phosphorylase B"/>
    <property type="match status" value="2"/>
</dbReference>
<dbReference type="InterPro" id="IPR010610">
    <property type="entry name" value="EryCIII-like_C"/>
</dbReference>
<dbReference type="InterPro" id="IPR002213">
    <property type="entry name" value="UDP_glucos_trans"/>
</dbReference>
<dbReference type="PANTHER" id="PTHR21015:SF22">
    <property type="entry name" value="GLYCOSYLTRANSFERASE"/>
    <property type="match status" value="1"/>
</dbReference>
<dbReference type="PANTHER" id="PTHR21015">
    <property type="entry name" value="UDP-N-ACETYLGLUCOSAMINE--N-ACETYLMURAMYL-(PENTAPEPTIDE) PYROPHOSPHORYL-UNDECAPRENOL N-ACETYLGLUCOSAMINE TRANSFERASE 1"/>
    <property type="match status" value="1"/>
</dbReference>
<dbReference type="Pfam" id="PF06722">
    <property type="entry name" value="EryCIII-like_C"/>
    <property type="match status" value="1"/>
</dbReference>
<dbReference type="SUPFAM" id="SSF53756">
    <property type="entry name" value="UDP-Glycosyltransferase/glycogen phosphorylase"/>
    <property type="match status" value="1"/>
</dbReference>
<protein>
    <recommendedName>
        <fullName>PGL/p-HBAD biosynthesis rhamnosyltransferase</fullName>
        <ecNumber>2.4.1.-</ecNumber>
    </recommendedName>
</protein>
<accession>A5U6X0</accession>
<gene>
    <name type="ordered locus">MRA_2989</name>
</gene>
<organism>
    <name type="scientific">Mycobacterium tuberculosis (strain ATCC 25177 / H37Ra)</name>
    <dbReference type="NCBI Taxonomy" id="419947"/>
    <lineage>
        <taxon>Bacteria</taxon>
        <taxon>Bacillati</taxon>
        <taxon>Actinomycetota</taxon>
        <taxon>Actinomycetes</taxon>
        <taxon>Mycobacteriales</taxon>
        <taxon>Mycobacteriaceae</taxon>
        <taxon>Mycobacterium</taxon>
        <taxon>Mycobacterium tuberculosis complex</taxon>
    </lineage>
</organism>